<feature type="chain" id="PRO_0000274159" description="Epimerase family protein SH2119">
    <location>
        <begin position="1"/>
        <end position="299"/>
    </location>
</feature>
<dbReference type="EMBL" id="AP006716">
    <property type="protein sequence ID" value="BAE05428.1"/>
    <property type="molecule type" value="Genomic_DNA"/>
</dbReference>
<dbReference type="RefSeq" id="WP_011276383.1">
    <property type="nucleotide sequence ID" value="NC_007168.1"/>
</dbReference>
<dbReference type="SMR" id="Q4L4J7"/>
<dbReference type="KEGG" id="sha:SH2119"/>
<dbReference type="eggNOG" id="COG1090">
    <property type="taxonomic scope" value="Bacteria"/>
</dbReference>
<dbReference type="HOGENOM" id="CLU_047373_0_3_9"/>
<dbReference type="OrthoDB" id="9801773at2"/>
<dbReference type="Proteomes" id="UP000000543">
    <property type="component" value="Chromosome"/>
</dbReference>
<dbReference type="Gene3D" id="3.40.50.720">
    <property type="entry name" value="NAD(P)-binding Rossmann-like Domain"/>
    <property type="match status" value="1"/>
</dbReference>
<dbReference type="InterPro" id="IPR013549">
    <property type="entry name" value="DUF1731"/>
</dbReference>
<dbReference type="InterPro" id="IPR001509">
    <property type="entry name" value="Epimerase_deHydtase"/>
</dbReference>
<dbReference type="InterPro" id="IPR036291">
    <property type="entry name" value="NAD(P)-bd_dom_sf"/>
</dbReference>
<dbReference type="InterPro" id="IPR010099">
    <property type="entry name" value="SDR39U1"/>
</dbReference>
<dbReference type="NCBIfam" id="TIGR01777">
    <property type="entry name" value="yfcH"/>
    <property type="match status" value="1"/>
</dbReference>
<dbReference type="PANTHER" id="PTHR11092:SF0">
    <property type="entry name" value="EPIMERASE FAMILY PROTEIN SDR39U1"/>
    <property type="match status" value="1"/>
</dbReference>
<dbReference type="PANTHER" id="PTHR11092">
    <property type="entry name" value="SUGAR NUCLEOTIDE EPIMERASE RELATED"/>
    <property type="match status" value="1"/>
</dbReference>
<dbReference type="Pfam" id="PF08338">
    <property type="entry name" value="DUF1731"/>
    <property type="match status" value="1"/>
</dbReference>
<dbReference type="Pfam" id="PF01370">
    <property type="entry name" value="Epimerase"/>
    <property type="match status" value="1"/>
</dbReference>
<dbReference type="SUPFAM" id="SSF51735">
    <property type="entry name" value="NAD(P)-binding Rossmann-fold domains"/>
    <property type="match status" value="1"/>
</dbReference>
<gene>
    <name type="ordered locus">SH2119</name>
</gene>
<organism>
    <name type="scientific">Staphylococcus haemolyticus (strain JCSC1435)</name>
    <dbReference type="NCBI Taxonomy" id="279808"/>
    <lineage>
        <taxon>Bacteria</taxon>
        <taxon>Bacillati</taxon>
        <taxon>Bacillota</taxon>
        <taxon>Bacilli</taxon>
        <taxon>Bacillales</taxon>
        <taxon>Staphylococcaceae</taxon>
        <taxon>Staphylococcus</taxon>
    </lineage>
</organism>
<comment type="similarity">
    <text evidence="1">Belongs to the NAD(P)-dependent epimerase/dehydratase family. SDR39U1 subfamily.</text>
</comment>
<evidence type="ECO:0000305" key="1"/>
<protein>
    <recommendedName>
        <fullName>Epimerase family protein SH2119</fullName>
    </recommendedName>
</protein>
<accession>Q4L4J7</accession>
<name>Y2119_STAHJ</name>
<reference key="1">
    <citation type="journal article" date="2005" name="J. Bacteriol.">
        <title>Whole-genome sequencing of Staphylococcus haemolyticus uncovers the extreme plasticity of its genome and the evolution of human-colonizing staphylococcal species.</title>
        <authorList>
            <person name="Takeuchi F."/>
            <person name="Watanabe S."/>
            <person name="Baba T."/>
            <person name="Yuzawa H."/>
            <person name="Ito T."/>
            <person name="Morimoto Y."/>
            <person name="Kuroda M."/>
            <person name="Cui L."/>
            <person name="Takahashi M."/>
            <person name="Ankai A."/>
            <person name="Baba S."/>
            <person name="Fukui S."/>
            <person name="Lee J.C."/>
            <person name="Hiramatsu K."/>
        </authorList>
    </citation>
    <scope>NUCLEOTIDE SEQUENCE [LARGE SCALE GENOMIC DNA]</scope>
    <source>
        <strain>JCSC1435</strain>
    </source>
</reference>
<proteinExistence type="inferred from homology"/>
<sequence>MKQFLITGGTGMVGSQLVNKLKNRDVHITILTRSDKQSDDPKISYVNWSKDGWMSQVPDIDVVVNLAGATLNKRWTPSYKQLIMTSRIQSTQSLVDLFSQREHKPEVLFNASAMGYYPPSLYHTYTEKYQTHPFDFLSDVVYQWERFAKRFESFGTRVVLGRFSMILSNDGGALQTMKLPYKFFVGGKLGSGFQWYSWIHINDLVRAILFTIDNPNAKGPFNMAAPIAERQNLFGYTLARVMHRPHETWVPSFLMRLALGEMSTVVLDTQKVLPNKLDALGFTFNYSNLKIAFEDLIDA</sequence>